<gene>
    <name evidence="1" type="primary">rplS</name>
    <name type="ordered locus">cbdbA278</name>
</gene>
<proteinExistence type="inferred from homology"/>
<keyword id="KW-0687">Ribonucleoprotein</keyword>
<keyword id="KW-0689">Ribosomal protein</keyword>
<feature type="chain" id="PRO_0000226844" description="Large ribosomal subunit protein bL19">
    <location>
        <begin position="1"/>
        <end position="131"/>
    </location>
</feature>
<feature type="region of interest" description="Disordered" evidence="2">
    <location>
        <begin position="1"/>
        <end position="20"/>
    </location>
</feature>
<feature type="compositionally biased region" description="Polar residues" evidence="2">
    <location>
        <begin position="1"/>
        <end position="11"/>
    </location>
</feature>
<organism>
    <name type="scientific">Dehalococcoides mccartyi (strain CBDB1)</name>
    <dbReference type="NCBI Taxonomy" id="255470"/>
    <lineage>
        <taxon>Bacteria</taxon>
        <taxon>Bacillati</taxon>
        <taxon>Chloroflexota</taxon>
        <taxon>Dehalococcoidia</taxon>
        <taxon>Dehalococcoidales</taxon>
        <taxon>Dehalococcoidaceae</taxon>
        <taxon>Dehalococcoides</taxon>
    </lineage>
</organism>
<sequence>MEETMNNQEAPETSEEETVAVENTKAEKVLPNFGPGDTIKVHARIKEGDKERIQMFQGVVLKVKQAADGGNFTVRRISYGVGVERTFPFLSPNVTKVEIMKKGRVRRARLFYLRKLSGKAARIKEVKQTPS</sequence>
<comment type="function">
    <text evidence="1">This protein is located at the 30S-50S ribosomal subunit interface and may play a role in the structure and function of the aminoacyl-tRNA binding site.</text>
</comment>
<comment type="similarity">
    <text evidence="1">Belongs to the bacterial ribosomal protein bL19 family.</text>
</comment>
<accession>Q3ZZA7</accession>
<reference key="1">
    <citation type="journal article" date="2005" name="Nat. Biotechnol.">
        <title>Genome sequence of the chlorinated compound-respiring bacterium Dehalococcoides species strain CBDB1.</title>
        <authorList>
            <person name="Kube M."/>
            <person name="Beck A."/>
            <person name="Zinder S.H."/>
            <person name="Kuhl H."/>
            <person name="Reinhardt R."/>
            <person name="Adrian L."/>
        </authorList>
    </citation>
    <scope>NUCLEOTIDE SEQUENCE [LARGE SCALE GENOMIC DNA]</scope>
    <source>
        <strain>CBDB1</strain>
    </source>
</reference>
<evidence type="ECO:0000255" key="1">
    <source>
        <dbReference type="HAMAP-Rule" id="MF_00402"/>
    </source>
</evidence>
<evidence type="ECO:0000256" key="2">
    <source>
        <dbReference type="SAM" id="MobiDB-lite"/>
    </source>
</evidence>
<evidence type="ECO:0000305" key="3"/>
<protein>
    <recommendedName>
        <fullName evidence="1">Large ribosomal subunit protein bL19</fullName>
    </recommendedName>
    <alternativeName>
        <fullName evidence="3">50S ribosomal protein L19</fullName>
    </alternativeName>
</protein>
<name>RL19_DEHMC</name>
<dbReference type="EMBL" id="AJ965256">
    <property type="protein sequence ID" value="CAI82511.1"/>
    <property type="molecule type" value="Genomic_DNA"/>
</dbReference>
<dbReference type="RefSeq" id="WP_011308869.1">
    <property type="nucleotide sequence ID" value="NC_007356.1"/>
</dbReference>
<dbReference type="SMR" id="Q3ZZA7"/>
<dbReference type="KEGG" id="deh:cbdbA278"/>
<dbReference type="HOGENOM" id="CLU_103507_2_0_0"/>
<dbReference type="Proteomes" id="UP000000433">
    <property type="component" value="Chromosome"/>
</dbReference>
<dbReference type="GO" id="GO:0022625">
    <property type="term" value="C:cytosolic large ribosomal subunit"/>
    <property type="evidence" value="ECO:0007669"/>
    <property type="project" value="TreeGrafter"/>
</dbReference>
<dbReference type="GO" id="GO:0003735">
    <property type="term" value="F:structural constituent of ribosome"/>
    <property type="evidence" value="ECO:0007669"/>
    <property type="project" value="InterPro"/>
</dbReference>
<dbReference type="GO" id="GO:0006412">
    <property type="term" value="P:translation"/>
    <property type="evidence" value="ECO:0007669"/>
    <property type="project" value="UniProtKB-UniRule"/>
</dbReference>
<dbReference type="Gene3D" id="2.30.30.790">
    <property type="match status" value="1"/>
</dbReference>
<dbReference type="HAMAP" id="MF_00402">
    <property type="entry name" value="Ribosomal_bL19"/>
    <property type="match status" value="1"/>
</dbReference>
<dbReference type="InterPro" id="IPR001857">
    <property type="entry name" value="Ribosomal_bL19"/>
</dbReference>
<dbReference type="InterPro" id="IPR018257">
    <property type="entry name" value="Ribosomal_bL19_CS"/>
</dbReference>
<dbReference type="InterPro" id="IPR038657">
    <property type="entry name" value="Ribosomal_bL19_sf"/>
</dbReference>
<dbReference type="InterPro" id="IPR008991">
    <property type="entry name" value="Translation_prot_SH3-like_sf"/>
</dbReference>
<dbReference type="NCBIfam" id="TIGR01024">
    <property type="entry name" value="rplS_bact"/>
    <property type="match status" value="1"/>
</dbReference>
<dbReference type="PANTHER" id="PTHR15680:SF9">
    <property type="entry name" value="LARGE RIBOSOMAL SUBUNIT PROTEIN BL19M"/>
    <property type="match status" value="1"/>
</dbReference>
<dbReference type="PANTHER" id="PTHR15680">
    <property type="entry name" value="RIBOSOMAL PROTEIN L19"/>
    <property type="match status" value="1"/>
</dbReference>
<dbReference type="Pfam" id="PF01245">
    <property type="entry name" value="Ribosomal_L19"/>
    <property type="match status" value="1"/>
</dbReference>
<dbReference type="PIRSF" id="PIRSF002191">
    <property type="entry name" value="Ribosomal_L19"/>
    <property type="match status" value="1"/>
</dbReference>
<dbReference type="PRINTS" id="PR00061">
    <property type="entry name" value="RIBOSOMALL19"/>
</dbReference>
<dbReference type="SUPFAM" id="SSF50104">
    <property type="entry name" value="Translation proteins SH3-like domain"/>
    <property type="match status" value="1"/>
</dbReference>
<dbReference type="PROSITE" id="PS01015">
    <property type="entry name" value="RIBOSOMAL_L19"/>
    <property type="match status" value="1"/>
</dbReference>